<name>TX1A_AUGEZ</name>
<feature type="chain" id="PRO_0000444200" description="Mu-theraphotoxin-Ae1a" evidence="2">
    <location>
        <begin position="1"/>
        <end position="39"/>
    </location>
</feature>
<feature type="modified residue" description="Phenylalanine amide" evidence="2">
    <location>
        <position position="39"/>
    </location>
</feature>
<feature type="disulfide bond" evidence="1">
    <location>
        <begin position="7"/>
        <end position="21"/>
    </location>
</feature>
<feature type="disulfide bond" evidence="1">
    <location>
        <begin position="14"/>
        <end position="26"/>
    </location>
</feature>
<feature type="disulfide bond" evidence="1">
    <location>
        <begin position="20"/>
        <end position="33"/>
    </location>
</feature>
<proteinExistence type="evidence at protein level"/>
<dbReference type="SMR" id="P0DPG5"/>
<dbReference type="GO" id="GO:0005576">
    <property type="term" value="C:extracellular region"/>
    <property type="evidence" value="ECO:0007669"/>
    <property type="project" value="UniProtKB-SubCell"/>
</dbReference>
<dbReference type="GO" id="GO:0008200">
    <property type="term" value="F:ion channel inhibitor activity"/>
    <property type="evidence" value="ECO:0007669"/>
    <property type="project" value="InterPro"/>
</dbReference>
<dbReference type="GO" id="GO:0017080">
    <property type="term" value="F:sodium channel regulator activity"/>
    <property type="evidence" value="ECO:0007669"/>
    <property type="project" value="UniProtKB-KW"/>
</dbReference>
<dbReference type="GO" id="GO:0090729">
    <property type="term" value="F:toxin activity"/>
    <property type="evidence" value="ECO:0007669"/>
    <property type="project" value="UniProtKB-KW"/>
</dbReference>
<dbReference type="InterPro" id="IPR011696">
    <property type="entry name" value="Huwentoxin-1"/>
</dbReference>
<dbReference type="Pfam" id="PF07740">
    <property type="entry name" value="Toxin_12"/>
    <property type="match status" value="1"/>
</dbReference>
<dbReference type="SUPFAM" id="SSF57059">
    <property type="entry name" value="omega toxin-like"/>
    <property type="match status" value="1"/>
</dbReference>
<evidence type="ECO:0000250" key="1">
    <source>
        <dbReference type="UniProtKB" id="P56855"/>
    </source>
</evidence>
<evidence type="ECO:0000269" key="2">
    <source>
    </source>
</evidence>
<evidence type="ECO:0000303" key="3">
    <source>
    </source>
</evidence>
<evidence type="ECO:0000305" key="4"/>
<evidence type="ECO:0000305" key="5">
    <source>
    </source>
</evidence>
<comment type="function">
    <text evidence="2">Insecticidal toxin that acts, at least partially, by inhibiting insect voltage-gated sodium (NaV) channels of several insect species. The toxin binds to the voltage sensor in NaV channel domain II and inhibits channel opening by shifting the threshold for channel activation to more positive voltages. The toxin binding is sensitive to residues in the S1-S2 loop of the domain II voltage sensor. In vivo, the recombinant toxin causes paralysis and/or death to two dipteran species (Lucilia cuprina and Drosophila melanogaster). In contrast, the toxin does not show paralytic or lethal effect on the cotton bollworm Helicoverpa armigera and the triatomine bug Rhodinius prolixus.</text>
</comment>
<comment type="subcellular location">
    <subcellularLocation>
        <location evidence="2">Secreted</location>
    </subcellularLocation>
</comment>
<comment type="tissue specificity">
    <text evidence="5">Expressed by the venom gland.</text>
</comment>
<comment type="domain">
    <text evidence="1">The presence of a 'disulfide through disulfide knot' structurally defines this protein as a knottin.</text>
</comment>
<comment type="mass spectrometry">
    <text>Monoisotopic mass.</text>
</comment>
<comment type="toxic dose">
    <text evidence="2">PD(50) is 0.96 nmol/g in Lucilia cuprina (at 0.5-1 hour post-injection). No paralytic or lethal effects are observed 24 hours post-injection.</text>
</comment>
<comment type="toxic dose">
    <text evidence="2">Injection of recombinant toxin into Drosophila melanogaster induces irreversible paralysis leading to death. PD(50) is 0.285 nmol/g (at 3 hours post-injection). PD(50) is 1.9 nmol/g (at 24 hours post-injection). LD(50) is 4.3 nmol/g (at 24 hours post-injection).</text>
</comment>
<comment type="miscellaneous">
    <text evidence="2">Negative results: the recombinant toxin has no effect on american cockroach Nav channels and on the human voltage-gated sodium channel Nav1.5/SCN5A.</text>
</comment>
<comment type="similarity">
    <text evidence="4">Belongs to the neurotoxin 10 (Hwtx-1) family. 47 subfamily.</text>
</comment>
<keyword id="KW-0027">Amidation</keyword>
<keyword id="KW-0903">Direct protein sequencing</keyword>
<keyword id="KW-1015">Disulfide bond</keyword>
<keyword id="KW-0872">Ion channel impairing toxin</keyword>
<keyword id="KW-0960">Knottin</keyword>
<keyword id="KW-0528">Neurotoxin</keyword>
<keyword id="KW-0964">Secreted</keyword>
<keyword id="KW-0800">Toxin</keyword>
<keyword id="KW-0738">Voltage-gated sodium channel impairing toxin</keyword>
<protein>
    <recommendedName>
        <fullName evidence="3">Mu-theraphotoxin-Ae1a</fullName>
        <shortName evidence="3">Mu-TRTX-Ae1a</shortName>
    </recommendedName>
</protein>
<organism>
    <name type="scientific">Augacephalus ezendami</name>
    <name type="common">Mozambique baboon spider</name>
    <name type="synonym">Ceratogyrus ezendami</name>
    <dbReference type="NCBI Taxonomy" id="2053131"/>
    <lineage>
        <taxon>Eukaryota</taxon>
        <taxon>Metazoa</taxon>
        <taxon>Ecdysozoa</taxon>
        <taxon>Arthropoda</taxon>
        <taxon>Chelicerata</taxon>
        <taxon>Arachnida</taxon>
        <taxon>Araneae</taxon>
        <taxon>Mygalomorphae</taxon>
        <taxon>Theraphosidae</taxon>
        <taxon>Augacephalus</taxon>
    </lineage>
</organism>
<reference key="1">
    <citation type="journal article" date="2016" name="Sci. Rep.">
        <title>Molecular basis of the remarkable species selectivity of an insecticidal sodium channel toxin from the African spider Augacephalus ezendami.</title>
        <authorList>
            <person name="Herzig V."/>
            <person name="Ikonomopoulou M."/>
            <person name="Smith J.J."/>
            <person name="Dziemborowicz S."/>
            <person name="Gilchrist J."/>
            <person name="Kuhn-Nentwig L."/>
            <person name="Rezende F.O."/>
            <person name="Moreira L.A."/>
            <person name="Nicholson G.M."/>
            <person name="Bosmans F."/>
            <person name="King G.F."/>
        </authorList>
    </citation>
    <scope>PROTEIN SEQUENCE</scope>
    <scope>FUNCTION</scope>
    <scope>AMIDATION AT PHE-39</scope>
    <scope>MASS SPECTROMETRY</scope>
    <scope>SUBCELLULAR LOCATION</scope>
    <scope>TOXIC DOSE</scope>
    <source>
        <tissue>Venom</tissue>
    </source>
</reference>
<accession>P0DPG5</accession>
<sequence>GVDKEGCRYLLGACTIDDDCCLHLGCNKKYGHCGWDGTF</sequence>